<gene>
    <name evidence="1" type="primary">mfd</name>
    <name type="ordered locus">HI_1258</name>
</gene>
<keyword id="KW-0067">ATP-binding</keyword>
<keyword id="KW-0963">Cytoplasm</keyword>
<keyword id="KW-0227">DNA damage</keyword>
<keyword id="KW-0234">DNA repair</keyword>
<keyword id="KW-0238">DNA-binding</keyword>
<keyword id="KW-0347">Helicase</keyword>
<keyword id="KW-0378">Hydrolase</keyword>
<keyword id="KW-0547">Nucleotide-binding</keyword>
<keyword id="KW-1185">Reference proteome</keyword>
<organism>
    <name type="scientific">Haemophilus influenzae (strain ATCC 51907 / DSM 11121 / KW20 / Rd)</name>
    <dbReference type="NCBI Taxonomy" id="71421"/>
    <lineage>
        <taxon>Bacteria</taxon>
        <taxon>Pseudomonadati</taxon>
        <taxon>Pseudomonadota</taxon>
        <taxon>Gammaproteobacteria</taxon>
        <taxon>Pasteurellales</taxon>
        <taxon>Pasteurellaceae</taxon>
        <taxon>Haemophilus</taxon>
    </lineage>
</organism>
<name>MFD_HAEIN</name>
<protein>
    <recommendedName>
        <fullName evidence="1">Transcription-repair-coupling factor</fullName>
        <shortName evidence="1">TRCF</shortName>
        <ecNumber evidence="1">3.6.4.-</ecNumber>
    </recommendedName>
</protein>
<reference key="1">
    <citation type="journal article" date="1995" name="Science">
        <title>Whole-genome random sequencing and assembly of Haemophilus influenzae Rd.</title>
        <authorList>
            <person name="Fleischmann R.D."/>
            <person name="Adams M.D."/>
            <person name="White O."/>
            <person name="Clayton R.A."/>
            <person name="Kirkness E.F."/>
            <person name="Kerlavage A.R."/>
            <person name="Bult C.J."/>
            <person name="Tomb J.-F."/>
            <person name="Dougherty B.A."/>
            <person name="Merrick J.M."/>
            <person name="McKenney K."/>
            <person name="Sutton G.G."/>
            <person name="FitzHugh W."/>
            <person name="Fields C.A."/>
            <person name="Gocayne J.D."/>
            <person name="Scott J.D."/>
            <person name="Shirley R."/>
            <person name="Liu L.-I."/>
            <person name="Glodek A."/>
            <person name="Kelley J.M."/>
            <person name="Weidman J.F."/>
            <person name="Phillips C.A."/>
            <person name="Spriggs T."/>
            <person name="Hedblom E."/>
            <person name="Cotton M.D."/>
            <person name="Utterback T.R."/>
            <person name="Hanna M.C."/>
            <person name="Nguyen D.T."/>
            <person name="Saudek D.M."/>
            <person name="Brandon R.C."/>
            <person name="Fine L.D."/>
            <person name="Fritchman J.L."/>
            <person name="Fuhrmann J.L."/>
            <person name="Geoghagen N.S.M."/>
            <person name="Gnehm C.L."/>
            <person name="McDonald L.A."/>
            <person name="Small K.V."/>
            <person name="Fraser C.M."/>
            <person name="Smith H.O."/>
            <person name="Venter J.C."/>
        </authorList>
    </citation>
    <scope>NUCLEOTIDE SEQUENCE [LARGE SCALE GENOMIC DNA]</scope>
    <source>
        <strain>ATCC 51907 / DSM 11121 / KW20 / Rd</strain>
    </source>
</reference>
<feature type="chain" id="PRO_0000102167" description="Transcription-repair-coupling factor">
    <location>
        <begin position="1"/>
        <end position="1146"/>
    </location>
</feature>
<feature type="domain" description="Helicase ATP-binding" evidence="1">
    <location>
        <begin position="617"/>
        <end position="778"/>
    </location>
</feature>
<feature type="domain" description="Helicase C-terminal" evidence="1">
    <location>
        <begin position="800"/>
        <end position="953"/>
    </location>
</feature>
<feature type="short sequence motif" description="DEEH box">
    <location>
        <begin position="731"/>
        <end position="734"/>
    </location>
</feature>
<feature type="binding site" evidence="1">
    <location>
        <begin position="630"/>
        <end position="637"/>
    </location>
    <ligand>
        <name>ATP</name>
        <dbReference type="ChEBI" id="CHEBI:30616"/>
    </ligand>
</feature>
<evidence type="ECO:0000255" key="1">
    <source>
        <dbReference type="HAMAP-Rule" id="MF_00969"/>
    </source>
</evidence>
<sequence>MKTAFFQPDIPTQPNDHKILGNVLPGADALAISEISEQNQNLTVVVTPDTRSAVRLSRVLSELSSQDVCLFPDWETLPYDTFSPHQEIISSRLSALFHLQNAKKGIFLLPISTLMQRLCPPQYLQHNVLLIKKGDRLVIDKMRLQLEAAGYRAVEQVLEHGEYAVRGALLDLFPMGSAVPFRLDFFDDEIDSIRTFDVDTQRTLDEISSINLLPAHEFPTDDKGIEFFRAQFRETFGEIRRDPEHIYQQISKGTLISGIEYWQPLFFAEMATLFDYLPEQTLFVDMENNQTQGERFYQDAKQRYEQRKVDPMRPLLSPEKLWLNVDEVNRRLKSYPRITFKAEKVRSSVRQKNLPVAALPEVTIQSQQKEPLGQLRQFIEHFKGNVLFSVETEGRRETLLDLLSPLKLKPKQIQSLEQIENEKFSLLVSSLEQGFIIEQSLPVAIIGEANLLGKRIQQRSRDKRKTINPDTLVRNLAELKIGQPVVHLDHGVGRYGGLVTLDTGGIKAEYLLLNYANESKLYVPVTSLHLISRYVGGSDESAPLHKLGNEAWAKSRQKAAEKIRDVAAELLDVYAQREAKKGFAFKYDREEFQQFSATFPFEETYDQEMAINAVISDMCQPKAMDRLVCGDVGFGKTEVAMRAAFLAVMNHKQVAVLVPTTLLAQQHYENFKDRFANLPVNVEVLSRFKTAKEQKQILENLAEGKVDILIGTHKLIQSDVKFNDLGLLIIDEEHRFGVGQKEKIKQLRANIDILTLTATPIPRTLNMAMNGIRDLSIISTPPARRLSIKTFVRQNDDLVVREAILREILRGGQVYYLHNDVASIENTAEKLTALVPEARVIVGHGQMRERELERVMSDFYHQRYNVLVCSTIIETGIDVPTANTIIIERADHFGLAQLHQLRGRVGRSHHQAYAYLLTPPPKMMTKDAERRLDALENLDNLGAGFILATHDLEIRGAGELLGNEQSGQIESIGFSLYMELLDAAVKALKEGREPSLEELTQQQADIELRVPALLPDDYLGDVNMRLSFYKRIAAAESKAELDELKVELIDRFGLLPDATKNLLQITELRLLVEPLNVVRIDAGTQGGFIEFSAKAQVNPDKFIQLIQKEPIVYRFDGPFKFKFMKDLSDNKVRLEFVVDLLRTIAA</sequence>
<proteinExistence type="inferred from homology"/>
<accession>P45128</accession>
<dbReference type="EC" id="3.6.4.-" evidence="1"/>
<dbReference type="EMBL" id="L42023">
    <property type="protein sequence ID" value="AAC22905.1"/>
    <property type="molecule type" value="Genomic_DNA"/>
</dbReference>
<dbReference type="PIR" id="I64112">
    <property type="entry name" value="I64112"/>
</dbReference>
<dbReference type="RefSeq" id="NP_439413.1">
    <property type="nucleotide sequence ID" value="NC_000907.1"/>
</dbReference>
<dbReference type="SMR" id="P45128"/>
<dbReference type="STRING" id="71421.HI_1258"/>
<dbReference type="EnsemblBacteria" id="AAC22905">
    <property type="protein sequence ID" value="AAC22905"/>
    <property type="gene ID" value="HI_1258"/>
</dbReference>
<dbReference type="KEGG" id="hin:HI_1258"/>
<dbReference type="PATRIC" id="fig|71421.8.peg.1310"/>
<dbReference type="eggNOG" id="COG1197">
    <property type="taxonomic scope" value="Bacteria"/>
</dbReference>
<dbReference type="HOGENOM" id="CLU_005122_0_3_6"/>
<dbReference type="OrthoDB" id="9804325at2"/>
<dbReference type="PhylomeDB" id="P45128"/>
<dbReference type="BioCyc" id="HINF71421:G1GJ1-1286-MONOMER"/>
<dbReference type="Proteomes" id="UP000000579">
    <property type="component" value="Chromosome"/>
</dbReference>
<dbReference type="GO" id="GO:0005737">
    <property type="term" value="C:cytoplasm"/>
    <property type="evidence" value="ECO:0007669"/>
    <property type="project" value="UniProtKB-SubCell"/>
</dbReference>
<dbReference type="GO" id="GO:0005524">
    <property type="term" value="F:ATP binding"/>
    <property type="evidence" value="ECO:0007669"/>
    <property type="project" value="UniProtKB-UniRule"/>
</dbReference>
<dbReference type="GO" id="GO:0003684">
    <property type="term" value="F:damaged DNA binding"/>
    <property type="evidence" value="ECO:0007669"/>
    <property type="project" value="InterPro"/>
</dbReference>
<dbReference type="GO" id="GO:0003677">
    <property type="term" value="F:DNA binding"/>
    <property type="evidence" value="ECO:0000318"/>
    <property type="project" value="GO_Central"/>
</dbReference>
<dbReference type="GO" id="GO:0015616">
    <property type="term" value="F:DNA translocase activity"/>
    <property type="evidence" value="ECO:0000318"/>
    <property type="project" value="GO_Central"/>
</dbReference>
<dbReference type="GO" id="GO:0004386">
    <property type="term" value="F:helicase activity"/>
    <property type="evidence" value="ECO:0007669"/>
    <property type="project" value="UniProtKB-KW"/>
</dbReference>
<dbReference type="GO" id="GO:0016787">
    <property type="term" value="F:hydrolase activity"/>
    <property type="evidence" value="ECO:0007669"/>
    <property type="project" value="UniProtKB-KW"/>
</dbReference>
<dbReference type="GO" id="GO:0043175">
    <property type="term" value="F:RNA polymerase core enzyme binding"/>
    <property type="evidence" value="ECO:0000318"/>
    <property type="project" value="GO_Central"/>
</dbReference>
<dbReference type="GO" id="GO:0006355">
    <property type="term" value="P:regulation of DNA-templated transcription"/>
    <property type="evidence" value="ECO:0000318"/>
    <property type="project" value="GO_Central"/>
</dbReference>
<dbReference type="GO" id="GO:0000716">
    <property type="term" value="P:transcription-coupled nucleotide-excision repair, DNA damage recognition"/>
    <property type="evidence" value="ECO:0000318"/>
    <property type="project" value="GO_Central"/>
</dbReference>
<dbReference type="CDD" id="cd17991">
    <property type="entry name" value="DEXHc_TRCF"/>
    <property type="match status" value="1"/>
</dbReference>
<dbReference type="CDD" id="cd18810">
    <property type="entry name" value="SF2_C_TRCF"/>
    <property type="match status" value="1"/>
</dbReference>
<dbReference type="FunFam" id="3.40.50.300:FF:000300">
    <property type="entry name" value="Transcription-repair-coupling factor"/>
    <property type="match status" value="1"/>
</dbReference>
<dbReference type="FunFam" id="3.40.50.300:FF:000546">
    <property type="entry name" value="Transcription-repair-coupling factor"/>
    <property type="match status" value="1"/>
</dbReference>
<dbReference type="Gene3D" id="2.40.10.170">
    <property type="match status" value="1"/>
</dbReference>
<dbReference type="Gene3D" id="3.40.50.11140">
    <property type="match status" value="1"/>
</dbReference>
<dbReference type="Gene3D" id="3.40.50.11180">
    <property type="match status" value="1"/>
</dbReference>
<dbReference type="Gene3D" id="3.40.50.300">
    <property type="entry name" value="P-loop containing nucleotide triphosphate hydrolases"/>
    <property type="match status" value="2"/>
</dbReference>
<dbReference type="Gene3D" id="3.30.2060.10">
    <property type="entry name" value="Penicillin-binding protein 1b domain"/>
    <property type="match status" value="1"/>
</dbReference>
<dbReference type="Gene3D" id="3.90.1150.50">
    <property type="entry name" value="Transcription-repair-coupling factor, D7 domain"/>
    <property type="match status" value="1"/>
</dbReference>
<dbReference type="HAMAP" id="MF_00969">
    <property type="entry name" value="TRCF"/>
    <property type="match status" value="1"/>
</dbReference>
<dbReference type="InterPro" id="IPR003711">
    <property type="entry name" value="CarD-like/TRCF_RID"/>
</dbReference>
<dbReference type="InterPro" id="IPR036101">
    <property type="entry name" value="CarD-like/TRCF_RID_sf"/>
</dbReference>
<dbReference type="InterPro" id="IPR011545">
    <property type="entry name" value="DEAD/DEAH_box_helicase_dom"/>
</dbReference>
<dbReference type="InterPro" id="IPR014001">
    <property type="entry name" value="Helicase_ATP-bd"/>
</dbReference>
<dbReference type="InterPro" id="IPR001650">
    <property type="entry name" value="Helicase_C-like"/>
</dbReference>
<dbReference type="InterPro" id="IPR004576">
    <property type="entry name" value="Mfd"/>
</dbReference>
<dbReference type="InterPro" id="IPR048635">
    <property type="entry name" value="MFD_D3"/>
</dbReference>
<dbReference type="InterPro" id="IPR027417">
    <property type="entry name" value="P-loop_NTPase"/>
</dbReference>
<dbReference type="InterPro" id="IPR047112">
    <property type="entry name" value="RecG/Mfd"/>
</dbReference>
<dbReference type="InterPro" id="IPR037235">
    <property type="entry name" value="TRCF-like_C_D7"/>
</dbReference>
<dbReference type="InterPro" id="IPR005118">
    <property type="entry name" value="TRCF_C"/>
</dbReference>
<dbReference type="InterPro" id="IPR041471">
    <property type="entry name" value="UvrB_inter"/>
</dbReference>
<dbReference type="NCBIfam" id="TIGR00580">
    <property type="entry name" value="mfd"/>
    <property type="match status" value="1"/>
</dbReference>
<dbReference type="NCBIfam" id="NF007966">
    <property type="entry name" value="PRK10689.1"/>
    <property type="match status" value="1"/>
</dbReference>
<dbReference type="PANTHER" id="PTHR47964">
    <property type="entry name" value="ATP-DEPENDENT DNA HELICASE HOMOLOG RECG, CHLOROPLASTIC"/>
    <property type="match status" value="1"/>
</dbReference>
<dbReference type="PANTHER" id="PTHR47964:SF1">
    <property type="entry name" value="ATP-DEPENDENT DNA HELICASE HOMOLOG RECG, CHLOROPLASTIC"/>
    <property type="match status" value="1"/>
</dbReference>
<dbReference type="Pfam" id="PF02559">
    <property type="entry name" value="CarD_TRCF_RID"/>
    <property type="match status" value="1"/>
</dbReference>
<dbReference type="Pfam" id="PF00270">
    <property type="entry name" value="DEAD"/>
    <property type="match status" value="1"/>
</dbReference>
<dbReference type="Pfam" id="PF00271">
    <property type="entry name" value="Helicase_C"/>
    <property type="match status" value="1"/>
</dbReference>
<dbReference type="Pfam" id="PF21132">
    <property type="entry name" value="MFD_D3"/>
    <property type="match status" value="1"/>
</dbReference>
<dbReference type="Pfam" id="PF03461">
    <property type="entry name" value="TRCF"/>
    <property type="match status" value="1"/>
</dbReference>
<dbReference type="Pfam" id="PF17757">
    <property type="entry name" value="UvrB_inter"/>
    <property type="match status" value="1"/>
</dbReference>
<dbReference type="SMART" id="SM01058">
    <property type="entry name" value="CarD_TRCF"/>
    <property type="match status" value="1"/>
</dbReference>
<dbReference type="SMART" id="SM00487">
    <property type="entry name" value="DEXDc"/>
    <property type="match status" value="1"/>
</dbReference>
<dbReference type="SMART" id="SM00490">
    <property type="entry name" value="HELICc"/>
    <property type="match status" value="1"/>
</dbReference>
<dbReference type="SMART" id="SM00982">
    <property type="entry name" value="TRCF"/>
    <property type="match status" value="1"/>
</dbReference>
<dbReference type="SUPFAM" id="SSF141259">
    <property type="entry name" value="CarD-like"/>
    <property type="match status" value="1"/>
</dbReference>
<dbReference type="SUPFAM" id="SSF52540">
    <property type="entry name" value="P-loop containing nucleoside triphosphate hydrolases"/>
    <property type="match status" value="4"/>
</dbReference>
<dbReference type="SUPFAM" id="SSF143517">
    <property type="entry name" value="TRCF domain-like"/>
    <property type="match status" value="1"/>
</dbReference>
<dbReference type="PROSITE" id="PS51192">
    <property type="entry name" value="HELICASE_ATP_BIND_1"/>
    <property type="match status" value="1"/>
</dbReference>
<dbReference type="PROSITE" id="PS51194">
    <property type="entry name" value="HELICASE_CTER"/>
    <property type="match status" value="1"/>
</dbReference>
<comment type="function">
    <text evidence="1">Couples transcription and DNA repair by recognizing RNA polymerase (RNAP) stalled at DNA lesions. Mediates ATP-dependent release of RNAP and its truncated transcript from the DNA, and recruitment of nucleotide excision repair machinery to the damaged site.</text>
</comment>
<comment type="subcellular location">
    <subcellularLocation>
        <location evidence="1">Cytoplasm</location>
    </subcellularLocation>
</comment>
<comment type="similarity">
    <text evidence="1">In the N-terminal section; belongs to the UvrB family.</text>
</comment>
<comment type="similarity">
    <text evidence="1">In the C-terminal section; belongs to the helicase family. RecG subfamily.</text>
</comment>